<feature type="chain" id="PRO_1000191202" description="5-methyltetrahydropteroyltriglutamate--homocysteine methyltransferase">
    <location>
        <begin position="1"/>
        <end position="753"/>
    </location>
</feature>
<feature type="active site" description="Proton donor" evidence="1">
    <location>
        <position position="694"/>
    </location>
</feature>
<feature type="binding site" evidence="1">
    <location>
        <begin position="17"/>
        <end position="20"/>
    </location>
    <ligand>
        <name>5-methyltetrahydropteroyltri-L-glutamate</name>
        <dbReference type="ChEBI" id="CHEBI:58207"/>
    </ligand>
</feature>
<feature type="binding site" evidence="1">
    <location>
        <position position="117"/>
    </location>
    <ligand>
        <name>5-methyltetrahydropteroyltri-L-glutamate</name>
        <dbReference type="ChEBI" id="CHEBI:58207"/>
    </ligand>
</feature>
<feature type="binding site" evidence="1">
    <location>
        <begin position="431"/>
        <end position="433"/>
    </location>
    <ligand>
        <name>L-homocysteine</name>
        <dbReference type="ChEBI" id="CHEBI:58199"/>
    </ligand>
</feature>
<feature type="binding site" evidence="1">
    <location>
        <begin position="431"/>
        <end position="433"/>
    </location>
    <ligand>
        <name>L-methionine</name>
        <dbReference type="ChEBI" id="CHEBI:57844"/>
    </ligand>
</feature>
<feature type="binding site" evidence="1">
    <location>
        <position position="484"/>
    </location>
    <ligand>
        <name>L-homocysteine</name>
        <dbReference type="ChEBI" id="CHEBI:58199"/>
    </ligand>
</feature>
<feature type="binding site" evidence="1">
    <location>
        <position position="484"/>
    </location>
    <ligand>
        <name>L-methionine</name>
        <dbReference type="ChEBI" id="CHEBI:57844"/>
    </ligand>
</feature>
<feature type="binding site" evidence="1">
    <location>
        <begin position="515"/>
        <end position="516"/>
    </location>
    <ligand>
        <name>5-methyltetrahydropteroyltri-L-glutamate</name>
        <dbReference type="ChEBI" id="CHEBI:58207"/>
    </ligand>
</feature>
<feature type="binding site" evidence="1">
    <location>
        <position position="561"/>
    </location>
    <ligand>
        <name>5-methyltetrahydropteroyltri-L-glutamate</name>
        <dbReference type="ChEBI" id="CHEBI:58207"/>
    </ligand>
</feature>
<feature type="binding site" evidence="1">
    <location>
        <position position="599"/>
    </location>
    <ligand>
        <name>L-homocysteine</name>
        <dbReference type="ChEBI" id="CHEBI:58199"/>
    </ligand>
</feature>
<feature type="binding site" evidence="1">
    <location>
        <position position="599"/>
    </location>
    <ligand>
        <name>L-methionine</name>
        <dbReference type="ChEBI" id="CHEBI:57844"/>
    </ligand>
</feature>
<feature type="binding site" evidence="1">
    <location>
        <position position="605"/>
    </location>
    <ligand>
        <name>5-methyltetrahydropteroyltri-L-glutamate</name>
        <dbReference type="ChEBI" id="CHEBI:58207"/>
    </ligand>
</feature>
<feature type="binding site" evidence="1">
    <location>
        <position position="641"/>
    </location>
    <ligand>
        <name>Zn(2+)</name>
        <dbReference type="ChEBI" id="CHEBI:29105"/>
        <note>catalytic</note>
    </ligand>
</feature>
<feature type="binding site" evidence="1">
    <location>
        <position position="643"/>
    </location>
    <ligand>
        <name>Zn(2+)</name>
        <dbReference type="ChEBI" id="CHEBI:29105"/>
        <note>catalytic</note>
    </ligand>
</feature>
<feature type="binding site" evidence="1">
    <location>
        <position position="665"/>
    </location>
    <ligand>
        <name>Zn(2+)</name>
        <dbReference type="ChEBI" id="CHEBI:29105"/>
        <note>catalytic</note>
    </ligand>
</feature>
<feature type="binding site" evidence="1">
    <location>
        <position position="726"/>
    </location>
    <ligand>
        <name>Zn(2+)</name>
        <dbReference type="ChEBI" id="CHEBI:29105"/>
        <note>catalytic</note>
    </ligand>
</feature>
<comment type="function">
    <text evidence="1">Catalyzes the transfer of a methyl group from 5-methyltetrahydrofolate to homocysteine resulting in methionine formation.</text>
</comment>
<comment type="catalytic activity">
    <reaction evidence="1">
        <text>5-methyltetrahydropteroyltri-L-glutamate + L-homocysteine = tetrahydropteroyltri-L-glutamate + L-methionine</text>
        <dbReference type="Rhea" id="RHEA:21196"/>
        <dbReference type="ChEBI" id="CHEBI:57844"/>
        <dbReference type="ChEBI" id="CHEBI:58140"/>
        <dbReference type="ChEBI" id="CHEBI:58199"/>
        <dbReference type="ChEBI" id="CHEBI:58207"/>
        <dbReference type="EC" id="2.1.1.14"/>
    </reaction>
</comment>
<comment type="cofactor">
    <cofactor evidence="1">
        <name>Zn(2+)</name>
        <dbReference type="ChEBI" id="CHEBI:29105"/>
    </cofactor>
    <text evidence="1">Binds 1 zinc ion per subunit.</text>
</comment>
<comment type="pathway">
    <text evidence="1">Amino-acid biosynthesis; L-methionine biosynthesis via de novo pathway; L-methionine from L-homocysteine (MetE route): step 1/1.</text>
</comment>
<comment type="similarity">
    <text evidence="1">Belongs to the vitamin-B12 independent methionine synthase family.</text>
</comment>
<dbReference type="EC" id="2.1.1.14" evidence="1"/>
<dbReference type="EMBL" id="CU928158">
    <property type="protein sequence ID" value="CAQ91133.1"/>
    <property type="molecule type" value="Genomic_DNA"/>
</dbReference>
<dbReference type="RefSeq" id="WP_000153917.1">
    <property type="nucleotide sequence ID" value="NC_011740.1"/>
</dbReference>
<dbReference type="SMR" id="B7LU25"/>
<dbReference type="GeneID" id="75059728"/>
<dbReference type="KEGG" id="efe:EFER_3671"/>
<dbReference type="HOGENOM" id="CLU_013175_0_0_6"/>
<dbReference type="OrthoDB" id="244285at2"/>
<dbReference type="UniPathway" id="UPA00051">
    <property type="reaction ID" value="UER00082"/>
</dbReference>
<dbReference type="Proteomes" id="UP000000745">
    <property type="component" value="Chromosome"/>
</dbReference>
<dbReference type="GO" id="GO:0003871">
    <property type="term" value="F:5-methyltetrahydropteroyltriglutamate-homocysteine S-methyltransferase activity"/>
    <property type="evidence" value="ECO:0007669"/>
    <property type="project" value="UniProtKB-UniRule"/>
</dbReference>
<dbReference type="GO" id="GO:0008270">
    <property type="term" value="F:zinc ion binding"/>
    <property type="evidence" value="ECO:0007669"/>
    <property type="project" value="InterPro"/>
</dbReference>
<dbReference type="GO" id="GO:0009086">
    <property type="term" value="P:methionine biosynthetic process"/>
    <property type="evidence" value="ECO:0007669"/>
    <property type="project" value="UniProtKB-UniRule"/>
</dbReference>
<dbReference type="GO" id="GO:0032259">
    <property type="term" value="P:methylation"/>
    <property type="evidence" value="ECO:0007669"/>
    <property type="project" value="UniProtKB-KW"/>
</dbReference>
<dbReference type="CDD" id="cd03311">
    <property type="entry name" value="CIMS_C_terminal_like"/>
    <property type="match status" value="1"/>
</dbReference>
<dbReference type="CDD" id="cd03312">
    <property type="entry name" value="CIMS_N_terminal_like"/>
    <property type="match status" value="1"/>
</dbReference>
<dbReference type="FunFam" id="3.20.20.210:FF:000002">
    <property type="entry name" value="5-methyltetrahydropteroyltriglutamate--homocysteine methyltransferase"/>
    <property type="match status" value="1"/>
</dbReference>
<dbReference type="FunFam" id="3.20.20.210:FF:000003">
    <property type="entry name" value="5-methyltetrahydropteroyltriglutamate--homocysteine methyltransferase"/>
    <property type="match status" value="1"/>
</dbReference>
<dbReference type="Gene3D" id="3.20.20.210">
    <property type="match status" value="2"/>
</dbReference>
<dbReference type="HAMAP" id="MF_00172">
    <property type="entry name" value="Meth_synth"/>
    <property type="match status" value="1"/>
</dbReference>
<dbReference type="InterPro" id="IPR013215">
    <property type="entry name" value="Cbl-indep_Met_Synth_N"/>
</dbReference>
<dbReference type="InterPro" id="IPR006276">
    <property type="entry name" value="Cobalamin-indep_Met_synthase"/>
</dbReference>
<dbReference type="InterPro" id="IPR002629">
    <property type="entry name" value="Met_Synth_C/arc"/>
</dbReference>
<dbReference type="InterPro" id="IPR038071">
    <property type="entry name" value="UROD/MetE-like_sf"/>
</dbReference>
<dbReference type="NCBIfam" id="TIGR01371">
    <property type="entry name" value="met_syn_B12ind"/>
    <property type="match status" value="1"/>
</dbReference>
<dbReference type="NCBIfam" id="NF003556">
    <property type="entry name" value="PRK05222.1"/>
    <property type="match status" value="1"/>
</dbReference>
<dbReference type="PANTHER" id="PTHR30519">
    <property type="entry name" value="5-METHYLTETRAHYDROPTEROYLTRIGLUTAMATE--HOMOCYSTEINE METHYLTRANSFERASE"/>
    <property type="match status" value="1"/>
</dbReference>
<dbReference type="Pfam" id="PF08267">
    <property type="entry name" value="Meth_synt_1"/>
    <property type="match status" value="1"/>
</dbReference>
<dbReference type="Pfam" id="PF01717">
    <property type="entry name" value="Meth_synt_2"/>
    <property type="match status" value="1"/>
</dbReference>
<dbReference type="PIRSF" id="PIRSF000382">
    <property type="entry name" value="MeTrfase_B12_ind"/>
    <property type="match status" value="1"/>
</dbReference>
<dbReference type="SUPFAM" id="SSF51726">
    <property type="entry name" value="UROD/MetE-like"/>
    <property type="match status" value="2"/>
</dbReference>
<organism>
    <name type="scientific">Escherichia fergusonii (strain ATCC 35469 / DSM 13698 / CCUG 18766 / IAM 14443 / JCM 21226 / LMG 7866 / NBRC 102419 / NCTC 12128 / CDC 0568-73)</name>
    <dbReference type="NCBI Taxonomy" id="585054"/>
    <lineage>
        <taxon>Bacteria</taxon>
        <taxon>Pseudomonadati</taxon>
        <taxon>Pseudomonadota</taxon>
        <taxon>Gammaproteobacteria</taxon>
        <taxon>Enterobacterales</taxon>
        <taxon>Enterobacteriaceae</taxon>
        <taxon>Escherichia</taxon>
    </lineage>
</organism>
<evidence type="ECO:0000255" key="1">
    <source>
        <dbReference type="HAMAP-Rule" id="MF_00172"/>
    </source>
</evidence>
<proteinExistence type="inferred from homology"/>
<keyword id="KW-0028">Amino-acid biosynthesis</keyword>
<keyword id="KW-0479">Metal-binding</keyword>
<keyword id="KW-0486">Methionine biosynthesis</keyword>
<keyword id="KW-0489">Methyltransferase</keyword>
<keyword id="KW-0677">Repeat</keyword>
<keyword id="KW-0808">Transferase</keyword>
<keyword id="KW-0862">Zinc</keyword>
<accession>B7LU25</accession>
<gene>
    <name evidence="1" type="primary">metE</name>
    <name type="ordered locus">EFER_3671</name>
</gene>
<name>METE_ESCF3</name>
<reference key="1">
    <citation type="journal article" date="2009" name="PLoS Genet.">
        <title>Organised genome dynamics in the Escherichia coli species results in highly diverse adaptive paths.</title>
        <authorList>
            <person name="Touchon M."/>
            <person name="Hoede C."/>
            <person name="Tenaillon O."/>
            <person name="Barbe V."/>
            <person name="Baeriswyl S."/>
            <person name="Bidet P."/>
            <person name="Bingen E."/>
            <person name="Bonacorsi S."/>
            <person name="Bouchier C."/>
            <person name="Bouvet O."/>
            <person name="Calteau A."/>
            <person name="Chiapello H."/>
            <person name="Clermont O."/>
            <person name="Cruveiller S."/>
            <person name="Danchin A."/>
            <person name="Diard M."/>
            <person name="Dossat C."/>
            <person name="Karoui M.E."/>
            <person name="Frapy E."/>
            <person name="Garry L."/>
            <person name="Ghigo J.M."/>
            <person name="Gilles A.M."/>
            <person name="Johnson J."/>
            <person name="Le Bouguenec C."/>
            <person name="Lescat M."/>
            <person name="Mangenot S."/>
            <person name="Martinez-Jehanne V."/>
            <person name="Matic I."/>
            <person name="Nassif X."/>
            <person name="Oztas S."/>
            <person name="Petit M.A."/>
            <person name="Pichon C."/>
            <person name="Rouy Z."/>
            <person name="Ruf C.S."/>
            <person name="Schneider D."/>
            <person name="Tourret J."/>
            <person name="Vacherie B."/>
            <person name="Vallenet D."/>
            <person name="Medigue C."/>
            <person name="Rocha E.P.C."/>
            <person name="Denamur E."/>
        </authorList>
    </citation>
    <scope>NUCLEOTIDE SEQUENCE [LARGE SCALE GENOMIC DNA]</scope>
    <source>
        <strain>ATCC 35469 / DSM 13698 / BCRC 15582 / CCUG 18766 / IAM 14443 / JCM 21226 / LMG 7866 / NBRC 102419 / NCTC 12128 / CDC 0568-73</strain>
    </source>
</reference>
<protein>
    <recommendedName>
        <fullName evidence="1">5-methyltetrahydropteroyltriglutamate--homocysteine methyltransferase</fullName>
        <ecNumber evidence="1">2.1.1.14</ecNumber>
    </recommendedName>
    <alternativeName>
        <fullName evidence="1">Cobalamin-independent methionine synthase</fullName>
    </alternativeName>
    <alternativeName>
        <fullName evidence="1">Methionine synthase, vitamin-B12 independent isozyme</fullName>
    </alternativeName>
</protein>
<sequence length="753" mass="84651">MTILNHTLGFPRVGLRRELKKAQESYWAGNSTREELLAVGRELRARHWDQQKQAGIDLLPVGDFAWYDHVLTTSLLLGNVPARHQNKDGSVDIDTLFRIGRGRAPTGEPAAAAEMTKWFNTNYHYMVPEFVKGQQFKLTWTQLLEEVDEALALGHKVKPVLLGPVTYLWLGKVKGEQFDRLSLLNDILPVYQQVLAELAKRGIEWVQIDEPALVLELPQAWLDAYKPAYDALQGQVKLLLTTYFEGVTPNLDTITALPVQGLHVDLVHGKDDVAELHKRLPSDWLLSAGLINGRNVWRADLTEKYAQIKDIVGKRDLWVASSCSLLHSPIDLSVETRLDAEVKSWFAFALQKCHELALLRDALNSGDTAALAEWSAPIQARRHSTRVHNPAVEKRLAAITAQDSQRANVYEVRAEAQRARFKLPAWPTTTIGSFPQTTEIRTLRLDFKKGNLDANNYRTGIAEHIKQAIVEQERLGLDVLVHGEAERNDMVEYFGEHLDGFVFTQNGWVQSYGSRCVKPPIVIGDVSRPAPITVEWAKYAQSLTDKPVKGMLTGPVTILCWSFPREDVSRETIAKQIALALRDEVADLEAAGIGIIQIDEPALREGLPLRRSDWDAYLQWGVEAFRINAAVAKDDTQIHTHMCYCEFNDIMDSIAALDADVITIETSRSDMELLESFEEFDYPNEIGPGVYDIHSPNVPSVEWIEALLKKAAKRIPAERLWVNPDCGLKTRGWPETRAALANMVQAAQNLRRG</sequence>